<accession>Q8K442</accession>
<accession>A2AB96</accession>
<accession>Q6PAV3</accession>
<accession>Q8C0A9</accession>
<accession>Q8R0R4</accession>
<name>ABC8A_MOUSE</name>
<organism>
    <name type="scientific">Mus musculus</name>
    <name type="common">Mouse</name>
    <dbReference type="NCBI Taxonomy" id="10090"/>
    <lineage>
        <taxon>Eukaryota</taxon>
        <taxon>Metazoa</taxon>
        <taxon>Chordata</taxon>
        <taxon>Craniata</taxon>
        <taxon>Vertebrata</taxon>
        <taxon>Euteleostomi</taxon>
        <taxon>Mammalia</taxon>
        <taxon>Eutheria</taxon>
        <taxon>Euarchontoglires</taxon>
        <taxon>Glires</taxon>
        <taxon>Rodentia</taxon>
        <taxon>Myomorpha</taxon>
        <taxon>Muroidea</taxon>
        <taxon>Muridae</taxon>
        <taxon>Murinae</taxon>
        <taxon>Mus</taxon>
        <taxon>Mus</taxon>
    </lineage>
</organism>
<evidence type="ECO:0000250" key="1">
    <source>
        <dbReference type="UniProtKB" id="O94911"/>
    </source>
</evidence>
<evidence type="ECO:0000250" key="2">
    <source>
        <dbReference type="UniProtKB" id="Q8K440"/>
    </source>
</evidence>
<evidence type="ECO:0000255" key="3"/>
<evidence type="ECO:0000255" key="4">
    <source>
        <dbReference type="PROSITE-ProRule" id="PRU00434"/>
    </source>
</evidence>
<evidence type="ECO:0000269" key="5">
    <source>
    </source>
</evidence>
<evidence type="ECO:0000269" key="6">
    <source>
    </source>
</evidence>
<evidence type="ECO:0000269" key="7">
    <source>
    </source>
</evidence>
<evidence type="ECO:0000269" key="8">
    <source>
    </source>
</evidence>
<evidence type="ECO:0000305" key="9"/>
<evidence type="ECO:0000312" key="10">
    <source>
        <dbReference type="MGI" id="MGI:2386846"/>
    </source>
</evidence>
<gene>
    <name evidence="10" type="primary">Abca8a</name>
</gene>
<keyword id="KW-0067">ATP-binding</keyword>
<keyword id="KW-1003">Cell membrane</keyword>
<keyword id="KW-0325">Glycoprotein</keyword>
<keyword id="KW-0472">Membrane</keyword>
<keyword id="KW-0547">Nucleotide-binding</keyword>
<keyword id="KW-1185">Reference proteome</keyword>
<keyword id="KW-0677">Repeat</keyword>
<keyword id="KW-1278">Translocase</keyword>
<keyword id="KW-0812">Transmembrane</keyword>
<keyword id="KW-1133">Transmembrane helix</keyword>
<keyword id="KW-0813">Transport</keyword>
<protein>
    <recommendedName>
        <fullName evidence="9">ABC-type organic anion transporter ABCA8A</fullName>
        <ecNumber evidence="1">7.6.2.-</ecNumber>
    </recommendedName>
    <alternativeName>
        <fullName evidence="9">ATP-binding cassette sub-family A member 8A</fullName>
    </alternativeName>
</protein>
<proteinExistence type="evidence at protein level"/>
<reference key="1">
    <citation type="journal article" date="2003" name="Mamm. Genome">
        <title>Evolutionary analysis of a cluster of ATP-binding cassette (ABC) genes.</title>
        <authorList>
            <person name="Annilo T."/>
            <person name="Chen Z.-Q."/>
            <person name="Shulenin S."/>
            <person name="Dean M."/>
        </authorList>
    </citation>
    <scope>NUCLEOTIDE SEQUENCE [MRNA]</scope>
    <scope>TISSUE SPECIFICITY</scope>
    <scope>DEVELOPMENTAL STAGE</scope>
    <source>
        <strain>BALB/cJ</strain>
    </source>
</reference>
<reference key="2">
    <citation type="journal article" date="2005" name="Clin. Exp. Pharmacol. Physiol.">
        <title>Acute digoxin loading reduces ABCA8A mRNA expression in the mouse liver.</title>
        <authorList>
            <person name="Wakaumi M."/>
            <person name="Ishibashi K."/>
            <person name="Ando H."/>
            <person name="Kasanuki H."/>
            <person name="Tsuruoka S."/>
        </authorList>
    </citation>
    <scope>NUCLEOTIDE SEQUENCE [MRNA]</scope>
    <scope>TISSUE SPECIFICITY</scope>
    <scope>INDUCTION</scope>
    <source>
        <strain>BALB/cJ</strain>
        <tissue>Heart</tissue>
    </source>
</reference>
<reference key="3">
    <citation type="journal article" date="2009" name="PLoS Biol.">
        <title>Lineage-specific biology revealed by a finished genome assembly of the mouse.</title>
        <authorList>
            <person name="Church D.M."/>
            <person name="Goodstadt L."/>
            <person name="Hillier L.W."/>
            <person name="Zody M.C."/>
            <person name="Goldstein S."/>
            <person name="She X."/>
            <person name="Bult C.J."/>
            <person name="Agarwala R."/>
            <person name="Cherry J.L."/>
            <person name="DiCuccio M."/>
            <person name="Hlavina W."/>
            <person name="Kapustin Y."/>
            <person name="Meric P."/>
            <person name="Maglott D."/>
            <person name="Birtle Z."/>
            <person name="Marques A.C."/>
            <person name="Graves T."/>
            <person name="Zhou S."/>
            <person name="Teague B."/>
            <person name="Potamousis K."/>
            <person name="Churas C."/>
            <person name="Place M."/>
            <person name="Herschleb J."/>
            <person name="Runnheim R."/>
            <person name="Forrest D."/>
            <person name="Amos-Landgraf J."/>
            <person name="Schwartz D.C."/>
            <person name="Cheng Z."/>
            <person name="Lindblad-Toh K."/>
            <person name="Eichler E.E."/>
            <person name="Ponting C.P."/>
        </authorList>
    </citation>
    <scope>NUCLEOTIDE SEQUENCE [LARGE SCALE GENOMIC DNA]</scope>
    <source>
        <strain>C57BL/6J</strain>
    </source>
</reference>
<reference key="4">
    <citation type="journal article" date="2004" name="Genome Res.">
        <title>The status, quality, and expansion of the NIH full-length cDNA project: the Mammalian Gene Collection (MGC).</title>
        <authorList>
            <consortium name="The MGC Project Team"/>
        </authorList>
    </citation>
    <scope>NUCLEOTIDE SEQUENCE [LARGE SCALE MRNA] OF 811-1620</scope>
    <source>
        <strain>C57BL/6J</strain>
        <tissue>Eye</tissue>
        <tissue>Retina</tissue>
    </source>
</reference>
<reference key="5">
    <citation type="journal article" date="2005" name="Science">
        <title>The transcriptional landscape of the mammalian genome.</title>
        <authorList>
            <person name="Carninci P."/>
            <person name="Kasukawa T."/>
            <person name="Katayama S."/>
            <person name="Gough J."/>
            <person name="Frith M.C."/>
            <person name="Maeda N."/>
            <person name="Oyama R."/>
            <person name="Ravasi T."/>
            <person name="Lenhard B."/>
            <person name="Wells C."/>
            <person name="Kodzius R."/>
            <person name="Shimokawa K."/>
            <person name="Bajic V.B."/>
            <person name="Brenner S.E."/>
            <person name="Batalov S."/>
            <person name="Forrest A.R."/>
            <person name="Zavolan M."/>
            <person name="Davis M.J."/>
            <person name="Wilming L.G."/>
            <person name="Aidinis V."/>
            <person name="Allen J.E."/>
            <person name="Ambesi-Impiombato A."/>
            <person name="Apweiler R."/>
            <person name="Aturaliya R.N."/>
            <person name="Bailey T.L."/>
            <person name="Bansal M."/>
            <person name="Baxter L."/>
            <person name="Beisel K.W."/>
            <person name="Bersano T."/>
            <person name="Bono H."/>
            <person name="Chalk A.M."/>
            <person name="Chiu K.P."/>
            <person name="Choudhary V."/>
            <person name="Christoffels A."/>
            <person name="Clutterbuck D.R."/>
            <person name="Crowe M.L."/>
            <person name="Dalla E."/>
            <person name="Dalrymple B.P."/>
            <person name="de Bono B."/>
            <person name="Della Gatta G."/>
            <person name="di Bernardo D."/>
            <person name="Down T."/>
            <person name="Engstrom P."/>
            <person name="Fagiolini M."/>
            <person name="Faulkner G."/>
            <person name="Fletcher C.F."/>
            <person name="Fukushima T."/>
            <person name="Furuno M."/>
            <person name="Futaki S."/>
            <person name="Gariboldi M."/>
            <person name="Georgii-Hemming P."/>
            <person name="Gingeras T.R."/>
            <person name="Gojobori T."/>
            <person name="Green R.E."/>
            <person name="Gustincich S."/>
            <person name="Harbers M."/>
            <person name="Hayashi Y."/>
            <person name="Hensch T.K."/>
            <person name="Hirokawa N."/>
            <person name="Hill D."/>
            <person name="Huminiecki L."/>
            <person name="Iacono M."/>
            <person name="Ikeo K."/>
            <person name="Iwama A."/>
            <person name="Ishikawa T."/>
            <person name="Jakt M."/>
            <person name="Kanapin A."/>
            <person name="Katoh M."/>
            <person name="Kawasawa Y."/>
            <person name="Kelso J."/>
            <person name="Kitamura H."/>
            <person name="Kitano H."/>
            <person name="Kollias G."/>
            <person name="Krishnan S.P."/>
            <person name="Kruger A."/>
            <person name="Kummerfeld S.K."/>
            <person name="Kurochkin I.V."/>
            <person name="Lareau L.F."/>
            <person name="Lazarevic D."/>
            <person name="Lipovich L."/>
            <person name="Liu J."/>
            <person name="Liuni S."/>
            <person name="McWilliam S."/>
            <person name="Madan Babu M."/>
            <person name="Madera M."/>
            <person name="Marchionni L."/>
            <person name="Matsuda H."/>
            <person name="Matsuzawa S."/>
            <person name="Miki H."/>
            <person name="Mignone F."/>
            <person name="Miyake S."/>
            <person name="Morris K."/>
            <person name="Mottagui-Tabar S."/>
            <person name="Mulder N."/>
            <person name="Nakano N."/>
            <person name="Nakauchi H."/>
            <person name="Ng P."/>
            <person name="Nilsson R."/>
            <person name="Nishiguchi S."/>
            <person name="Nishikawa S."/>
            <person name="Nori F."/>
            <person name="Ohara O."/>
            <person name="Okazaki Y."/>
            <person name="Orlando V."/>
            <person name="Pang K.C."/>
            <person name="Pavan W.J."/>
            <person name="Pavesi G."/>
            <person name="Pesole G."/>
            <person name="Petrovsky N."/>
            <person name="Piazza S."/>
            <person name="Reed J."/>
            <person name="Reid J.F."/>
            <person name="Ring B.Z."/>
            <person name="Ringwald M."/>
            <person name="Rost B."/>
            <person name="Ruan Y."/>
            <person name="Salzberg S.L."/>
            <person name="Sandelin A."/>
            <person name="Schneider C."/>
            <person name="Schoenbach C."/>
            <person name="Sekiguchi K."/>
            <person name="Semple C.A."/>
            <person name="Seno S."/>
            <person name="Sessa L."/>
            <person name="Sheng Y."/>
            <person name="Shibata Y."/>
            <person name="Shimada H."/>
            <person name="Shimada K."/>
            <person name="Silva D."/>
            <person name="Sinclair B."/>
            <person name="Sperling S."/>
            <person name="Stupka E."/>
            <person name="Sugiura K."/>
            <person name="Sultana R."/>
            <person name="Takenaka Y."/>
            <person name="Taki K."/>
            <person name="Tammoja K."/>
            <person name="Tan S.L."/>
            <person name="Tang S."/>
            <person name="Taylor M.S."/>
            <person name="Tegner J."/>
            <person name="Teichmann S.A."/>
            <person name="Ueda H.R."/>
            <person name="van Nimwegen E."/>
            <person name="Verardo R."/>
            <person name="Wei C.L."/>
            <person name="Yagi K."/>
            <person name="Yamanishi H."/>
            <person name="Zabarovsky E."/>
            <person name="Zhu S."/>
            <person name="Zimmer A."/>
            <person name="Hide W."/>
            <person name="Bult C."/>
            <person name="Grimmond S.M."/>
            <person name="Teasdale R.D."/>
            <person name="Liu E.T."/>
            <person name="Brusic V."/>
            <person name="Quackenbush J."/>
            <person name="Wahlestedt C."/>
            <person name="Mattick J.S."/>
            <person name="Hume D.A."/>
            <person name="Kai C."/>
            <person name="Sasaki D."/>
            <person name="Tomaru Y."/>
            <person name="Fukuda S."/>
            <person name="Kanamori-Katayama M."/>
            <person name="Suzuki M."/>
            <person name="Aoki J."/>
            <person name="Arakawa T."/>
            <person name="Iida J."/>
            <person name="Imamura K."/>
            <person name="Itoh M."/>
            <person name="Kato T."/>
            <person name="Kawaji H."/>
            <person name="Kawagashira N."/>
            <person name="Kawashima T."/>
            <person name="Kojima M."/>
            <person name="Kondo S."/>
            <person name="Konno H."/>
            <person name="Nakano K."/>
            <person name="Ninomiya N."/>
            <person name="Nishio T."/>
            <person name="Okada M."/>
            <person name="Plessy C."/>
            <person name="Shibata K."/>
            <person name="Shiraki T."/>
            <person name="Suzuki S."/>
            <person name="Tagami M."/>
            <person name="Waki K."/>
            <person name="Watahiki A."/>
            <person name="Okamura-Oho Y."/>
            <person name="Suzuki H."/>
            <person name="Kawai J."/>
            <person name="Hayashizaki Y."/>
        </authorList>
    </citation>
    <scope>NUCLEOTIDE SEQUENCE [LARGE SCALE MRNA] OF 898-1620</scope>
    <source>
        <strain>C57BL/6J</strain>
        <tissue>Medulla oblongata</tissue>
    </source>
</reference>
<reference key="6">
    <citation type="journal article" date="2010" name="Cell">
        <title>A tissue-specific atlas of mouse protein phosphorylation and expression.</title>
        <authorList>
            <person name="Huttlin E.L."/>
            <person name="Jedrychowski M.P."/>
            <person name="Elias J.E."/>
            <person name="Goswami T."/>
            <person name="Rad R."/>
            <person name="Beausoleil S.A."/>
            <person name="Villen J."/>
            <person name="Haas W."/>
            <person name="Sowa M.E."/>
            <person name="Gygi S.P."/>
        </authorList>
    </citation>
    <scope>IDENTIFICATION BY MASS SPECTROMETRY [LARGE SCALE ANALYSIS]</scope>
    <source>
        <tissue>Brown adipose tissue</tissue>
        <tissue>Heart</tissue>
        <tissue>Kidney</tissue>
        <tissue>Liver</tissue>
        <tissue>Lung</tissue>
        <tissue>Pancreas</tissue>
    </source>
</reference>
<reference key="7">
    <citation type="journal article" date="2017" name="Arterioscler. Thromb. Vasc. Biol.">
        <title>ABCA8 Regulates Cholesterol Efflux and High-Density Lipoprotein Cholesterol Levels.</title>
        <authorList>
            <person name="Trigueros-Motos L."/>
            <person name="van Capelleveen J.C."/>
            <person name="Torta F."/>
            <person name="Castano D."/>
            <person name="Zhang L.H."/>
            <person name="Chai E.C."/>
            <person name="Kang M."/>
            <person name="Dimova L.G."/>
            <person name="Schimmel A.W.M."/>
            <person name="Tietjen I."/>
            <person name="Radomski C."/>
            <person name="Tan L.J."/>
            <person name="Thiam C.H."/>
            <person name="Narayanaswamy P."/>
            <person name="Wu D.H."/>
            <person name="Dorninger F."/>
            <person name="Yakala G.K."/>
            <person name="Barhdadi A."/>
            <person name="Angeli V."/>
            <person name="Dube M.P."/>
            <person name="Berger J."/>
            <person name="Dallinga-Thie G.M."/>
            <person name="Tietge U.J.F."/>
            <person name="Wenk M.R."/>
            <person name="Hayden M.R."/>
            <person name="Hovingh G.K."/>
            <person name="Singaraja R.R."/>
        </authorList>
    </citation>
    <scope>TISSUE SPECIFICITY</scope>
</reference>
<reference key="8">
    <citation type="journal article" date="2018" name="Mol. Pharm.">
        <title>ATP-Binding Cassette Transporter A Subfamily 8 Is a Sinusoidal Efflux Transporter for Cholesterol and Taurocholate in Mouse and Human Liver.</title>
        <authorList>
            <person name="Sasaki K."/>
            <person name="Tachikawa M."/>
            <person name="Uchida Y."/>
            <person name="Hirano S."/>
            <person name="Kadowaki F."/>
            <person name="Watanabe M."/>
            <person name="Ohtsuki S."/>
            <person name="Terasaki T."/>
        </authorList>
    </citation>
    <scope>TISSUE SPECIFICITY</scope>
    <scope>IDENTIFICATION BY MASS SPECTROMETRY</scope>
</reference>
<dbReference type="EC" id="7.6.2.-" evidence="1"/>
<dbReference type="EMBL" id="AF498360">
    <property type="protein sequence ID" value="AAM90906.1"/>
    <property type="molecule type" value="mRNA"/>
</dbReference>
<dbReference type="EMBL" id="AY732492">
    <property type="protein sequence ID" value="AAU81985.1"/>
    <property type="molecule type" value="mRNA"/>
</dbReference>
<dbReference type="EMBL" id="AL603792">
    <property type="status" value="NOT_ANNOTATED_CDS"/>
    <property type="molecule type" value="Genomic_DNA"/>
</dbReference>
<dbReference type="EMBL" id="AL662821">
    <property type="status" value="NOT_ANNOTATED_CDS"/>
    <property type="molecule type" value="Genomic_DNA"/>
</dbReference>
<dbReference type="EMBL" id="BC026496">
    <property type="protein sequence ID" value="AAH26496.1"/>
    <property type="molecule type" value="mRNA"/>
</dbReference>
<dbReference type="EMBL" id="BC060032">
    <property type="protein sequence ID" value="AAH60032.1"/>
    <property type="molecule type" value="mRNA"/>
</dbReference>
<dbReference type="EMBL" id="AK031843">
    <property type="protein sequence ID" value="BAC27576.1"/>
    <property type="status" value="ALT_FRAME"/>
    <property type="molecule type" value="mRNA"/>
</dbReference>
<dbReference type="RefSeq" id="NP_694785.3">
    <property type="nucleotide sequence ID" value="NM_153145.4"/>
</dbReference>
<dbReference type="SMR" id="Q8K442"/>
<dbReference type="BioGRID" id="229875">
    <property type="interactions" value="5"/>
</dbReference>
<dbReference type="FunCoup" id="Q8K442">
    <property type="interactions" value="81"/>
</dbReference>
<dbReference type="STRING" id="10090.ENSMUSP00000045808"/>
<dbReference type="GlyCosmos" id="Q8K442">
    <property type="glycosylation" value="3 sites, No reported glycans"/>
</dbReference>
<dbReference type="GlyGen" id="Q8K442">
    <property type="glycosylation" value="6 sites, 3 N-linked glycans (3 sites)"/>
</dbReference>
<dbReference type="iPTMnet" id="Q8K442"/>
<dbReference type="PhosphoSitePlus" id="Q8K442"/>
<dbReference type="SwissPalm" id="Q8K442"/>
<dbReference type="PaxDb" id="10090-ENSMUSP00000097860"/>
<dbReference type="ProteomicsDB" id="285948"/>
<dbReference type="DNASU" id="217258"/>
<dbReference type="Ensembl" id="ENSMUST00000100287.9">
    <property type="protein sequence ID" value="ENSMUSP00000097860.3"/>
    <property type="gene ID" value="ENSMUSG00000041828.17"/>
</dbReference>
<dbReference type="GeneID" id="217258"/>
<dbReference type="KEGG" id="mmu:217258"/>
<dbReference type="AGR" id="MGI:2386846"/>
<dbReference type="CTD" id="217258"/>
<dbReference type="MGI" id="MGI:2386846">
    <property type="gene designation" value="Abca8a"/>
</dbReference>
<dbReference type="VEuPathDB" id="HostDB:ENSMUSG00000041828"/>
<dbReference type="eggNOG" id="KOG0059">
    <property type="taxonomic scope" value="Eukaryota"/>
</dbReference>
<dbReference type="GeneTree" id="ENSGT00940000162012"/>
<dbReference type="InParanoid" id="Q8K442"/>
<dbReference type="OMA" id="LCKEQEM"/>
<dbReference type="OrthoDB" id="8061355at2759"/>
<dbReference type="PhylomeDB" id="Q8K442"/>
<dbReference type="TreeFam" id="TF105192"/>
<dbReference type="BioGRID-ORCS" id="217258">
    <property type="hits" value="3 hits in 76 CRISPR screens"/>
</dbReference>
<dbReference type="ChiTaRS" id="Abca8a">
    <property type="organism name" value="mouse"/>
</dbReference>
<dbReference type="PRO" id="PR:Q8K442"/>
<dbReference type="Proteomes" id="UP000000589">
    <property type="component" value="Chromosome 11"/>
</dbReference>
<dbReference type="RNAct" id="Q8K442">
    <property type="molecule type" value="protein"/>
</dbReference>
<dbReference type="Bgee" id="ENSMUSG00000041828">
    <property type="expression patterns" value="Expressed in sciatic nerve and 159 other cell types or tissues"/>
</dbReference>
<dbReference type="ExpressionAtlas" id="Q8K442">
    <property type="expression patterns" value="baseline and differential"/>
</dbReference>
<dbReference type="GO" id="GO:0016323">
    <property type="term" value="C:basolateral plasma membrane"/>
    <property type="evidence" value="ECO:0000250"/>
    <property type="project" value="UniProtKB"/>
</dbReference>
<dbReference type="GO" id="GO:0005783">
    <property type="term" value="C:endoplasmic reticulum"/>
    <property type="evidence" value="ECO:0000250"/>
    <property type="project" value="UniProtKB"/>
</dbReference>
<dbReference type="GO" id="GO:0005886">
    <property type="term" value="C:plasma membrane"/>
    <property type="evidence" value="ECO:0000250"/>
    <property type="project" value="UniProtKB"/>
</dbReference>
<dbReference type="GO" id="GO:0140359">
    <property type="term" value="F:ABC-type transporter activity"/>
    <property type="evidence" value="ECO:0000250"/>
    <property type="project" value="UniProtKB"/>
</dbReference>
<dbReference type="GO" id="GO:0008559">
    <property type="term" value="F:ABC-type xenobiotic transporter activity"/>
    <property type="evidence" value="ECO:0000250"/>
    <property type="project" value="UniProtKB"/>
</dbReference>
<dbReference type="GO" id="GO:0005524">
    <property type="term" value="F:ATP binding"/>
    <property type="evidence" value="ECO:0007669"/>
    <property type="project" value="UniProtKB-KW"/>
</dbReference>
<dbReference type="GO" id="GO:0016887">
    <property type="term" value="F:ATP hydrolysis activity"/>
    <property type="evidence" value="ECO:0007669"/>
    <property type="project" value="InterPro"/>
</dbReference>
<dbReference type="GO" id="GO:0033344">
    <property type="term" value="P:cholesterol efflux"/>
    <property type="evidence" value="ECO:0000250"/>
    <property type="project" value="UniProtKB"/>
</dbReference>
<dbReference type="GO" id="GO:0030301">
    <property type="term" value="P:cholesterol transport"/>
    <property type="evidence" value="ECO:0000250"/>
    <property type="project" value="UniProtKB"/>
</dbReference>
<dbReference type="GO" id="GO:0010875">
    <property type="term" value="P:positive regulation of cholesterol efflux"/>
    <property type="evidence" value="ECO:0000250"/>
    <property type="project" value="UniProtKB"/>
</dbReference>
<dbReference type="GO" id="GO:0010874">
    <property type="term" value="P:regulation of cholesterol efflux"/>
    <property type="evidence" value="ECO:0000250"/>
    <property type="project" value="UniProtKB"/>
</dbReference>
<dbReference type="GO" id="GO:0006686">
    <property type="term" value="P:sphingomyelin biosynthetic process"/>
    <property type="evidence" value="ECO:0000250"/>
    <property type="project" value="UniProtKB"/>
</dbReference>
<dbReference type="GO" id="GO:0042908">
    <property type="term" value="P:xenobiotic transport"/>
    <property type="evidence" value="ECO:0000250"/>
    <property type="project" value="UniProtKB"/>
</dbReference>
<dbReference type="CDD" id="cd03263">
    <property type="entry name" value="ABC_subfamily_A"/>
    <property type="match status" value="2"/>
</dbReference>
<dbReference type="FunFam" id="3.40.50.300:FF:000335">
    <property type="entry name" value="ATP binding cassette subfamily A member 5"/>
    <property type="match status" value="1"/>
</dbReference>
<dbReference type="FunFam" id="3.40.50.300:FF:000436">
    <property type="entry name" value="ATP binding cassette subfamily A member 9"/>
    <property type="match status" value="1"/>
</dbReference>
<dbReference type="Gene3D" id="3.40.50.300">
    <property type="entry name" value="P-loop containing nucleotide triphosphate hydrolases"/>
    <property type="match status" value="2"/>
</dbReference>
<dbReference type="InterPro" id="IPR003593">
    <property type="entry name" value="AAA+_ATPase"/>
</dbReference>
<dbReference type="InterPro" id="IPR013525">
    <property type="entry name" value="ABC2_TM"/>
</dbReference>
<dbReference type="InterPro" id="IPR003439">
    <property type="entry name" value="ABC_transporter-like_ATP-bd"/>
</dbReference>
<dbReference type="InterPro" id="IPR017871">
    <property type="entry name" value="ABC_transporter-like_CS"/>
</dbReference>
<dbReference type="InterPro" id="IPR026082">
    <property type="entry name" value="ABCA"/>
</dbReference>
<dbReference type="InterPro" id="IPR027417">
    <property type="entry name" value="P-loop_NTPase"/>
</dbReference>
<dbReference type="InterPro" id="IPR056264">
    <property type="entry name" value="R2_ABCA1-4-like"/>
</dbReference>
<dbReference type="PANTHER" id="PTHR19229:SF186">
    <property type="entry name" value="ABC-TYPE ORGANIC ANION TRANSPORTER ABCA8A"/>
    <property type="match status" value="1"/>
</dbReference>
<dbReference type="PANTHER" id="PTHR19229">
    <property type="entry name" value="ATP-BINDING CASSETTE TRANSPORTER SUBFAMILY A ABCA"/>
    <property type="match status" value="1"/>
</dbReference>
<dbReference type="Pfam" id="PF12698">
    <property type="entry name" value="ABC2_membrane_3"/>
    <property type="match status" value="2"/>
</dbReference>
<dbReference type="Pfam" id="PF00005">
    <property type="entry name" value="ABC_tran"/>
    <property type="match status" value="2"/>
</dbReference>
<dbReference type="Pfam" id="PF23321">
    <property type="entry name" value="R1_ABCA1"/>
    <property type="match status" value="1"/>
</dbReference>
<dbReference type="SMART" id="SM00382">
    <property type="entry name" value="AAA"/>
    <property type="match status" value="2"/>
</dbReference>
<dbReference type="SUPFAM" id="SSF52540">
    <property type="entry name" value="P-loop containing nucleoside triphosphate hydrolases"/>
    <property type="match status" value="2"/>
</dbReference>
<dbReference type="PROSITE" id="PS00211">
    <property type="entry name" value="ABC_TRANSPORTER_1"/>
    <property type="match status" value="1"/>
</dbReference>
<dbReference type="PROSITE" id="PS50893">
    <property type="entry name" value="ABC_TRANSPORTER_2"/>
    <property type="match status" value="2"/>
</dbReference>
<sequence length="1620" mass="184180">MVKREINVCQQTWALLCKNLLRKKRLKRDTFLEFLYTALILLSLILFLQLHEVYDFSSLPDVDLGRIDSFNDSTFMIVYTPITPTTQRIMDRVSLVSYMTGRKILASPNEENMTELISMRFSDVVGVIFTNAYSYNLKFIKGARIPTIKEHQDHTAHCHSYGEIIYCGLSEFWRDGFVALQAAINAAIIEVTTNHSVMEEMMSLTGKYIKIDSFVGQEGTTTDCFLFFCIIRFSPLTYYISAGVTRERKKMKGLMAVMGLRDSAFWLSWGLLYGVIVFVVTLLSTTIVKLVQFVFLTGFMVIFSLFFFYGLSLISLSFLMSVLLKKSFLTDLVVFLLTVSCGSLGFTALYRYLPVSLEWLLSLLSPFAFMLGMVQLLRLDYDVNSNADPMGNPNEVIGTIFMLFFDGVFYLLLTFYFEKVLPSKSFHDKTYWHACKSHFFLIDYSFYIRTALDNETDYEFSDDSFEPVSMEFHGKEAIRIRNLTKDYIQKSKRTEALKDLTLDVYKGQITAILGHSGAGKSTLLNVLSGLCVPTKGWVTIHNNKLSEMTDLENISKLTGVCPQCNVQFDFLTVRENLRLFAKIKGIQAHEVDNEVQRVLLELDMKNTQNILVQNLSGGQKRKLTFGIAILGDPQIFLLDEPTAGLDPFSRHRVWNFLKERRADRVVLFSTQFMDEADILADRKVFISKGKLKCAGSSLFLKKKWGIGYHLSLQLSETCVHERITSLVKQHIPDSKLSAESEGKLSYILPLERTNKFPDLYRDLERSPDLGIENYGVSITTLTEVFLKLEGKSSIDQSDIGMTEDVQAGGARSPERFAEVEQLVSLLNGRCKMKGGMALWWQQLCAVTRLRFLKLKHERKSIVILILVLGIGLLHILSANIYRMVRQSDYCWELAPHMYFLTPGQQPQPPLTNLLIVNKTGAKIDDFIHSLEQQNIALEVDAFGTRNGTEDSQYNGAIILSGDEKNYNFTLACNTKRLNCFPVLVDIVSNGLLGLFAPSAHIQTDRSTFPEENDHRKFDYLAYFFLWVLLMACVPPYISMTSIDDYKNRAQFQLWISGLSPSAYWFGQALFEVPVYCALILSIFIAFYASAPPESKFTVGDLFIQILYVGGYAMSVIFMTYVISFIYRKGRKNSGLWSLCFYIVSFFSMCFMLIDYFRDISLFVLIALVPPATLGGCTLLHFENREFSEIIFEPEREYSYLFFLAPLLHFAIFVVILRCMERKFGMKTMRTDPVFRISPRSDRVFNNPEDPDGEDEDVSQERVWTANALTSADFQEKPAIIASCLRKEYKGKKKCFVLKSKKKIATRNISFCVRKGEVVGLLGHNGAGKSTSIKMITGETKPSAGQVLLKGSSTGDTPGFLGYCPQENALWLNLTVREHLEIFAAIKGMRKSDANVAIERLADALKLQDQLKSPVKTLSEGVKRKLCFVLSILGNPSVVLLDEPSTGMDPEGQQQMWQAIQATFSNTERGALLTTHYMAEAEAVCDRVAIMVSGRLRCIGSIQHLKSKFGKEYLLEMKVKTPSQVEPLNTEIMRLFPQAARQERYSSLMVYKLPREDVQPLSQAFFKLETVKQSFDLEEYSLSQSTLEQVFLELSKEQELDGFEEELDPSVKWKLLPQEEA</sequence>
<feature type="chain" id="PRO_0000250678" description="ABC-type organic anion transporter ABCA8A">
    <location>
        <begin position="1"/>
        <end position="1620"/>
    </location>
</feature>
<feature type="transmembrane region" description="Helical" evidence="3">
    <location>
        <begin position="30"/>
        <end position="50"/>
    </location>
</feature>
<feature type="transmembrane region" description="Helical" evidence="3">
    <location>
        <begin position="224"/>
        <end position="244"/>
    </location>
</feature>
<feature type="transmembrane region" description="Helical" evidence="3">
    <location>
        <begin position="263"/>
        <end position="283"/>
    </location>
</feature>
<feature type="transmembrane region" description="Helical" evidence="3">
    <location>
        <begin position="294"/>
        <end position="314"/>
    </location>
</feature>
<feature type="transmembrane region" description="Helical" evidence="3">
    <location>
        <begin position="328"/>
        <end position="348"/>
    </location>
</feature>
<feature type="transmembrane region" description="Helical" evidence="3">
    <location>
        <begin position="357"/>
        <end position="377"/>
    </location>
</feature>
<feature type="transmembrane region" description="Helical" evidence="3">
    <location>
        <begin position="397"/>
        <end position="417"/>
    </location>
</feature>
<feature type="transmembrane region" description="Helical" evidence="3">
    <location>
        <begin position="861"/>
        <end position="881"/>
    </location>
</feature>
<feature type="transmembrane region" description="Helical" evidence="3">
    <location>
        <begin position="979"/>
        <end position="999"/>
    </location>
</feature>
<feature type="transmembrane region" description="Helical" evidence="3">
    <location>
        <begin position="1019"/>
        <end position="1039"/>
    </location>
</feature>
<feature type="transmembrane region" description="Helical" evidence="3">
    <location>
        <begin position="1068"/>
        <end position="1088"/>
    </location>
</feature>
<feature type="transmembrane region" description="Helical" evidence="3">
    <location>
        <begin position="1105"/>
        <end position="1125"/>
    </location>
</feature>
<feature type="transmembrane region" description="Helical" evidence="3">
    <location>
        <begin position="1133"/>
        <end position="1153"/>
    </location>
</feature>
<feature type="transmembrane region" description="Helical" evidence="3">
    <location>
        <begin position="1159"/>
        <end position="1179"/>
    </location>
</feature>
<feature type="transmembrane region" description="Helical" evidence="3">
    <location>
        <begin position="1196"/>
        <end position="1216"/>
    </location>
</feature>
<feature type="domain" description="ABC transporter 1" evidence="4">
    <location>
        <begin position="478"/>
        <end position="713"/>
    </location>
</feature>
<feature type="domain" description="ABC transporter 2" evidence="4">
    <location>
        <begin position="1284"/>
        <end position="1517"/>
    </location>
</feature>
<feature type="binding site" evidence="4">
    <location>
        <begin position="514"/>
        <end position="521"/>
    </location>
    <ligand>
        <name>ATP</name>
        <dbReference type="ChEBI" id="CHEBI:30616"/>
        <label>1</label>
    </ligand>
</feature>
<feature type="binding site" evidence="4">
    <location>
        <begin position="1322"/>
        <end position="1329"/>
    </location>
    <ligand>
        <name>ATP</name>
        <dbReference type="ChEBI" id="CHEBI:30616"/>
        <label>2</label>
    </ligand>
</feature>
<feature type="glycosylation site" description="N-linked (GlcNAc...) asparagine" evidence="3">
    <location>
        <position position="454"/>
    </location>
</feature>
<feature type="glycosylation site" description="N-linked (GlcNAc...) asparagine" evidence="3">
    <location>
        <position position="482"/>
    </location>
</feature>
<feature type="glycosylation site" description="N-linked (GlcNAc...) asparagine" evidence="3">
    <location>
        <position position="967"/>
    </location>
</feature>
<feature type="sequence conflict" description="In Ref. 1; AAM90906 and 2; AAU81985." evidence="9" ref="1 2">
    <original>R</original>
    <variation>S</variation>
    <location>
        <position position="449"/>
    </location>
</feature>
<feature type="sequence conflict" description="In Ref. 4; BAC27576." evidence="9" ref="4">
    <original>T</original>
    <variation>A</variation>
    <location>
        <position position="901"/>
    </location>
</feature>
<comment type="function">
    <text evidence="1">Mediates cholesterol and taurocholate efflux. Through the interaction with ABCA1 potentiates the cholesterol efflux to lipid-free APOA1, in turn regulates high-density lipoprotein cholesterol levels.</text>
</comment>
<comment type="catalytic activity">
    <reaction evidence="1">
        <text>taurocholate(in) + ATP + H2O = taurocholate(out) + ADP + phosphate + H(+)</text>
        <dbReference type="Rhea" id="RHEA:50052"/>
        <dbReference type="ChEBI" id="CHEBI:15377"/>
        <dbReference type="ChEBI" id="CHEBI:15378"/>
        <dbReference type="ChEBI" id="CHEBI:30616"/>
        <dbReference type="ChEBI" id="CHEBI:36257"/>
        <dbReference type="ChEBI" id="CHEBI:43474"/>
        <dbReference type="ChEBI" id="CHEBI:456216"/>
    </reaction>
    <physiologicalReaction direction="left-to-right" evidence="1">
        <dbReference type="Rhea" id="RHEA:50053"/>
    </physiologicalReaction>
</comment>
<comment type="catalytic activity">
    <reaction evidence="1">
        <text>cholesterol(in) + ATP + H2O = cholesterol(out) + ADP + phosphate + H(+)</text>
        <dbReference type="Rhea" id="RHEA:39051"/>
        <dbReference type="ChEBI" id="CHEBI:15377"/>
        <dbReference type="ChEBI" id="CHEBI:15378"/>
        <dbReference type="ChEBI" id="CHEBI:16113"/>
        <dbReference type="ChEBI" id="CHEBI:30616"/>
        <dbReference type="ChEBI" id="CHEBI:43474"/>
        <dbReference type="ChEBI" id="CHEBI:456216"/>
    </reaction>
    <physiologicalReaction direction="left-to-right" evidence="1">
        <dbReference type="Rhea" id="RHEA:39052"/>
    </physiologicalReaction>
</comment>
<comment type="activity regulation">
    <text evidence="1">Cholesterol efflux is increased by extracellularly applied taurocholate.</text>
</comment>
<comment type="subcellular location">
    <subcellularLocation>
        <location evidence="1">Cell membrane</location>
        <topology evidence="1">Multi-pass membrane protein</topology>
    </subcellularLocation>
    <subcellularLocation>
        <location evidence="2">Basolateral cell membrane</location>
    </subcellularLocation>
    <text evidence="2">Predominantly expressed on the sinusoidal plasma membrane.</text>
</comment>
<comment type="tissue specificity">
    <text evidence="5 6 7 8">Expressed in lung, heart, liver, skeletal muscle and testis (PubMed:12532264, PubMed:16445568). Highly expressed in the liver, and is also abundant in heart and skeletal muscle (PubMed:28882873). Highly expressed in heart (PubMed:29300488).</text>
</comment>
<comment type="developmental stage">
    <text evidence="5">Expression is first detected at 17 dpc.</text>
</comment>
<comment type="induction">
    <text evidence="6">Down-regulated by digoxin.</text>
</comment>
<comment type="similarity">
    <text evidence="9">Belongs to the ABC transporter superfamily. ABCA family.</text>
</comment>
<comment type="sequence caution" evidence="9">
    <conflict type="frameshift">
        <sequence resource="EMBL-CDS" id="BAC27576"/>
    </conflict>
</comment>